<comment type="function">
    <text evidence="1">Involved in ubiquitin-mediated protein degradation. Regulatory factor in the ubiquitin/proteasome pathway that controls the turnover of proteasome substrates. Targets proteasomes to the nucleus and facilitates the degradation of nuclear proteins (By similarity).</text>
</comment>
<comment type="subunit">
    <text evidence="1">Binds the proteasome.</text>
</comment>
<comment type="subcellular location">
    <subcellularLocation>
        <location evidence="1">Cytoplasm</location>
    </subcellularLocation>
    <subcellularLocation>
        <location evidence="1">Nucleus</location>
    </subcellularLocation>
</comment>
<comment type="similarity">
    <text evidence="3">Belongs to the cut8/STS1 family.</text>
</comment>
<keyword id="KW-0963">Cytoplasm</keyword>
<keyword id="KW-0539">Nucleus</keyword>
<keyword id="KW-0653">Protein transport</keyword>
<keyword id="KW-1185">Reference proteome</keyword>
<keyword id="KW-0813">Transport</keyword>
<reference key="1">
    <citation type="journal article" date="2003" name="Nucleic Acids Res.">
        <title>What's in the genome of a filamentous fungus? Analysis of the Neurospora genome sequence.</title>
        <authorList>
            <person name="Mannhaupt G."/>
            <person name="Montrone C."/>
            <person name="Haase D."/>
            <person name="Mewes H.-W."/>
            <person name="Aign V."/>
            <person name="Hoheisel J.D."/>
            <person name="Fartmann B."/>
            <person name="Nyakatura G."/>
            <person name="Kempken F."/>
            <person name="Maier J."/>
            <person name="Schulte U."/>
        </authorList>
    </citation>
    <scope>NUCLEOTIDE SEQUENCE [LARGE SCALE GENOMIC DNA]</scope>
    <source>
        <strain>ATCC 24698 / 74-OR23-1A / CBS 708.71 / DSM 1257 / FGSC 987</strain>
    </source>
</reference>
<reference key="2">
    <citation type="journal article" date="2003" name="Nature">
        <title>The genome sequence of the filamentous fungus Neurospora crassa.</title>
        <authorList>
            <person name="Galagan J.E."/>
            <person name="Calvo S.E."/>
            <person name="Borkovich K.A."/>
            <person name="Selker E.U."/>
            <person name="Read N.D."/>
            <person name="Jaffe D.B."/>
            <person name="FitzHugh W."/>
            <person name="Ma L.-J."/>
            <person name="Smirnov S."/>
            <person name="Purcell S."/>
            <person name="Rehman B."/>
            <person name="Elkins T."/>
            <person name="Engels R."/>
            <person name="Wang S."/>
            <person name="Nielsen C.B."/>
            <person name="Butler J."/>
            <person name="Endrizzi M."/>
            <person name="Qui D."/>
            <person name="Ianakiev P."/>
            <person name="Bell-Pedersen D."/>
            <person name="Nelson M.A."/>
            <person name="Werner-Washburne M."/>
            <person name="Selitrennikoff C.P."/>
            <person name="Kinsey J.A."/>
            <person name="Braun E.L."/>
            <person name="Zelter A."/>
            <person name="Schulte U."/>
            <person name="Kothe G.O."/>
            <person name="Jedd G."/>
            <person name="Mewes H.-W."/>
            <person name="Staben C."/>
            <person name="Marcotte E."/>
            <person name="Greenberg D."/>
            <person name="Roy A."/>
            <person name="Foley K."/>
            <person name="Naylor J."/>
            <person name="Stange-Thomann N."/>
            <person name="Barrett R."/>
            <person name="Gnerre S."/>
            <person name="Kamal M."/>
            <person name="Kamvysselis M."/>
            <person name="Mauceli E.W."/>
            <person name="Bielke C."/>
            <person name="Rudd S."/>
            <person name="Frishman D."/>
            <person name="Krystofova S."/>
            <person name="Rasmussen C."/>
            <person name="Metzenberg R.L."/>
            <person name="Perkins D.D."/>
            <person name="Kroken S."/>
            <person name="Cogoni C."/>
            <person name="Macino G."/>
            <person name="Catcheside D.E.A."/>
            <person name="Li W."/>
            <person name="Pratt R.J."/>
            <person name="Osmani S.A."/>
            <person name="DeSouza C.P.C."/>
            <person name="Glass N.L."/>
            <person name="Orbach M.J."/>
            <person name="Berglund J.A."/>
            <person name="Voelker R."/>
            <person name="Yarden O."/>
            <person name="Plamann M."/>
            <person name="Seiler S."/>
            <person name="Dunlap J.C."/>
            <person name="Radford A."/>
            <person name="Aramayo R."/>
            <person name="Natvig D.O."/>
            <person name="Alex L.A."/>
            <person name="Mannhaupt G."/>
            <person name="Ebbole D.J."/>
            <person name="Freitag M."/>
            <person name="Paulsen I."/>
            <person name="Sachs M.S."/>
            <person name="Lander E.S."/>
            <person name="Nusbaum C."/>
            <person name="Birren B.W."/>
        </authorList>
    </citation>
    <scope>NUCLEOTIDE SEQUENCE [LARGE SCALE GENOMIC DNA]</scope>
    <source>
        <strain>ATCC 24698 / 74-OR23-1A / CBS 708.71 / DSM 1257 / FGSC 987</strain>
    </source>
</reference>
<accession>Q9C224</accession>
<evidence type="ECO:0000250" key="1"/>
<evidence type="ECO:0000256" key="2">
    <source>
        <dbReference type="SAM" id="MobiDB-lite"/>
    </source>
</evidence>
<evidence type="ECO:0000305" key="3"/>
<protein>
    <recommendedName>
        <fullName>Tethering factor for nuclear proteasome sts1</fullName>
    </recommendedName>
</protein>
<proteinExistence type="inferred from homology"/>
<gene>
    <name type="primary">sts1</name>
    <name type="ORF">B8L3.030</name>
    <name type="ORF">NCU04274</name>
</gene>
<organism>
    <name type="scientific">Neurospora crassa (strain ATCC 24698 / 74-OR23-1A / CBS 708.71 / DSM 1257 / FGSC 987)</name>
    <dbReference type="NCBI Taxonomy" id="367110"/>
    <lineage>
        <taxon>Eukaryota</taxon>
        <taxon>Fungi</taxon>
        <taxon>Dikarya</taxon>
        <taxon>Ascomycota</taxon>
        <taxon>Pezizomycotina</taxon>
        <taxon>Sordariomycetes</taxon>
        <taxon>Sordariomycetidae</taxon>
        <taxon>Sordariales</taxon>
        <taxon>Sordariaceae</taxon>
        <taxon>Neurospora</taxon>
    </lineage>
</organism>
<feature type="chain" id="PRO_0000409419" description="Tethering factor for nuclear proteasome sts1">
    <location>
        <begin position="1"/>
        <end position="304"/>
    </location>
</feature>
<feature type="region of interest" description="Disordered" evidence="2">
    <location>
        <begin position="1"/>
        <end position="69"/>
    </location>
</feature>
<feature type="compositionally biased region" description="Polar residues" evidence="2">
    <location>
        <begin position="46"/>
        <end position="63"/>
    </location>
</feature>
<sequence length="304" mass="33483">MNVLLSPQPPFFPHQHEPSRRSPPRIMSQHTMASRKRKADDDDNEMSISPTGSPAINSRQLSRPSKKVRAGIELAGRPLPLPRLLETLDKSQLRAVLQTICERHPGIGHEVMVSAPRPSVNGALEVLGEYQDKLRAAIPFGNSSSEYTYFRVKQPLMALVDALGDFTPQFLPPVEQQATVSLEYLNHATKIVHDLPDFDSQQYRHHKDGAYDEISRAWALVITEAAKRGGGFHLHNGKWDQVLAKHNQQSGGKLEQAMNAMVNEVGWVGANSNAHGQGSSSDPNSILNQLINGTYGAPVQVGPF</sequence>
<name>STS1_NEUCR</name>
<dbReference type="EMBL" id="AL513462">
    <property type="protein sequence ID" value="CAC28737.1"/>
    <property type="molecule type" value="Genomic_DNA"/>
</dbReference>
<dbReference type="EMBL" id="CM002240">
    <property type="protein sequence ID" value="EAA31828.1"/>
    <property type="molecule type" value="Genomic_DNA"/>
</dbReference>
<dbReference type="RefSeq" id="XP_961064.1">
    <property type="nucleotide sequence ID" value="XM_955971.3"/>
</dbReference>
<dbReference type="SMR" id="Q9C224"/>
<dbReference type="FunCoup" id="Q9C224">
    <property type="interactions" value="9"/>
</dbReference>
<dbReference type="STRING" id="367110.Q9C224"/>
<dbReference type="PaxDb" id="5141-EFNCRP00000003986"/>
<dbReference type="EnsemblFungi" id="EAA31828">
    <property type="protein sequence ID" value="EAA31828"/>
    <property type="gene ID" value="NCU04274"/>
</dbReference>
<dbReference type="GeneID" id="3877218"/>
<dbReference type="KEGG" id="ncr:NCU04274"/>
<dbReference type="VEuPathDB" id="FungiDB:NCU04274"/>
<dbReference type="HOGENOM" id="CLU_033658_0_0_1"/>
<dbReference type="InParanoid" id="Q9C224"/>
<dbReference type="OMA" id="DYTPHFL"/>
<dbReference type="OrthoDB" id="10061064at2759"/>
<dbReference type="Proteomes" id="UP000001805">
    <property type="component" value="Chromosome 2, Linkage Group V"/>
</dbReference>
<dbReference type="GO" id="GO:0005737">
    <property type="term" value="C:cytoplasm"/>
    <property type="evidence" value="ECO:0007669"/>
    <property type="project" value="UniProtKB-SubCell"/>
</dbReference>
<dbReference type="GO" id="GO:0005634">
    <property type="term" value="C:nucleus"/>
    <property type="evidence" value="ECO:0007669"/>
    <property type="project" value="UniProtKB-SubCell"/>
</dbReference>
<dbReference type="GO" id="GO:0070628">
    <property type="term" value="F:proteasome binding"/>
    <property type="evidence" value="ECO:0000318"/>
    <property type="project" value="GO_Central"/>
</dbReference>
<dbReference type="GO" id="GO:0071630">
    <property type="term" value="P:nuclear protein quality control by the ubiquitin-proteasome system"/>
    <property type="evidence" value="ECO:0000318"/>
    <property type="project" value="GO_Central"/>
</dbReference>
<dbReference type="GO" id="GO:0031144">
    <property type="term" value="P:proteasome localization"/>
    <property type="evidence" value="ECO:0000318"/>
    <property type="project" value="GO_Central"/>
</dbReference>
<dbReference type="GO" id="GO:0015031">
    <property type="term" value="P:protein transport"/>
    <property type="evidence" value="ECO:0007669"/>
    <property type="project" value="UniProtKB-KW"/>
</dbReference>
<dbReference type="FunFam" id="1.20.58.1590:FF:000001">
    <property type="entry name" value="Tethering factor for nuclear proteasome STS1"/>
    <property type="match status" value="1"/>
</dbReference>
<dbReference type="Gene3D" id="1.20.58.1590">
    <property type="entry name" value="Tethering factor for nuclear proteasome Cut8/Sts1"/>
    <property type="match status" value="1"/>
</dbReference>
<dbReference type="InterPro" id="IPR013868">
    <property type="entry name" value="Cut8/Sts1_fam"/>
</dbReference>
<dbReference type="InterPro" id="IPR038422">
    <property type="entry name" value="Cut8/Sts1_sf"/>
</dbReference>
<dbReference type="PANTHER" id="PTHR28032">
    <property type="entry name" value="FI02826P"/>
    <property type="match status" value="1"/>
</dbReference>
<dbReference type="PANTHER" id="PTHR28032:SF1">
    <property type="entry name" value="FI02826P"/>
    <property type="match status" value="1"/>
</dbReference>
<dbReference type="Pfam" id="PF08559">
    <property type="entry name" value="Cut8"/>
    <property type="match status" value="1"/>
</dbReference>